<reference key="1">
    <citation type="submission" date="2006-10" db="EMBL/GenBank/DDBJ databases">
        <authorList>
            <person name="Fleischmann R.D."/>
            <person name="Dodson R.J."/>
            <person name="Haft D.H."/>
            <person name="Merkel J.S."/>
            <person name="Nelson W.C."/>
            <person name="Fraser C.M."/>
        </authorList>
    </citation>
    <scope>NUCLEOTIDE SEQUENCE [LARGE SCALE GENOMIC DNA]</scope>
    <source>
        <strain>ATCC 700084 / mc(2)155</strain>
    </source>
</reference>
<reference key="2">
    <citation type="journal article" date="2007" name="Genome Biol.">
        <title>Interrupted coding sequences in Mycobacterium smegmatis: authentic mutations or sequencing errors?</title>
        <authorList>
            <person name="Deshayes C."/>
            <person name="Perrodou E."/>
            <person name="Gallien S."/>
            <person name="Euphrasie D."/>
            <person name="Schaeffer C."/>
            <person name="Van-Dorsselaer A."/>
            <person name="Poch O."/>
            <person name="Lecompte O."/>
            <person name="Reyrat J.-M."/>
        </authorList>
    </citation>
    <scope>NUCLEOTIDE SEQUENCE [LARGE SCALE GENOMIC DNA]</scope>
    <source>
        <strain>ATCC 700084 / mc(2)155</strain>
    </source>
</reference>
<reference key="3">
    <citation type="journal article" date="2009" name="Genome Res.">
        <title>Ortho-proteogenomics: multiple proteomes investigation through orthology and a new MS-based protocol.</title>
        <authorList>
            <person name="Gallien S."/>
            <person name="Perrodou E."/>
            <person name="Carapito C."/>
            <person name="Deshayes C."/>
            <person name="Reyrat J.-M."/>
            <person name="Van Dorsselaer A."/>
            <person name="Poch O."/>
            <person name="Schaeffer C."/>
            <person name="Lecompte O."/>
        </authorList>
    </citation>
    <scope>NUCLEOTIDE SEQUENCE [LARGE SCALE GENOMIC DNA]</scope>
    <source>
        <strain>ATCC 700084 / mc(2)155</strain>
    </source>
</reference>
<reference key="4">
    <citation type="journal article" date="2000" name="Biochemistry">
        <title>A novel mycothiol-dependent detoxification pathway in mycobacteria involving mycothiol S-conjugate amidase.</title>
        <authorList>
            <person name="Newton G.L."/>
            <person name="Av-Gay Y."/>
            <person name="Fahey R.C."/>
        </authorList>
    </citation>
    <scope>PROTEIN SEQUENCE OF 2-20</scope>
    <scope>FUNCTION</scope>
    <scope>ACTIVITY REGULATION</scope>
    <scope>BIOPHYSICOCHEMICAL PROPERTIES</scope>
    <scope>SUBUNIT</scope>
    <source>
        <strain>ATCC 700084 / mc(2)155</strain>
    </source>
</reference>
<reference key="5">
    <citation type="journal article" date="2004" name="J. Bacteriol.">
        <title>Targeted mutagenesis of the Mycobacterium smegmatis mca gene, encoding a mycothiol-dependent detoxification protein.</title>
        <authorList>
            <person name="Rawat M."/>
            <person name="Uppal M."/>
            <person name="Newton G."/>
            <person name="Steffek M."/>
            <person name="Fahey R.C."/>
            <person name="Av-Gay Y."/>
        </authorList>
    </citation>
    <scope>DISRUPTION PHENOTYPE</scope>
    <source>
        <strain>ATCC 700084 / mc(2)155</strain>
    </source>
</reference>
<keyword id="KW-0903">Direct protein sequencing</keyword>
<keyword id="KW-0378">Hydrolase</keyword>
<keyword id="KW-0479">Metal-binding</keyword>
<keyword id="KW-1185">Reference proteome</keyword>
<keyword id="KW-0862">Zinc</keyword>
<accession>A0R2W9</accession>
<comment type="function">
    <text evidence="2">A mycothiol (MSH, N-acetyl-cysteinyl-glucosaminyl-inositol) S-conjugate amidase, it recycles conjugated MSH to the N-acetyl cysteine conjugate and the MSH precursor. Involved in MSH-dependent detoxification of a number of alkylating agents and antibiotics. Activity is specific for the mycothiol moiety.</text>
</comment>
<comment type="catalytic activity">
    <reaction evidence="1">
        <text>mycothiol S-conjugate + H2O = an N-acetyl-L-cysteine-S-conjugate + 1D-myo-inositol 2-amino-2-deoxy-alpha-D-glucopyranoside</text>
        <dbReference type="Rhea" id="RHEA:36543"/>
        <dbReference type="ChEBI" id="CHEBI:15377"/>
        <dbReference type="ChEBI" id="CHEBI:58718"/>
        <dbReference type="ChEBI" id="CHEBI:58886"/>
        <dbReference type="ChEBI" id="CHEBI:59633"/>
        <dbReference type="EC" id="3.5.1.115"/>
    </reaction>
</comment>
<comment type="cofactor">
    <cofactor evidence="1">
        <name>Zn(2+)</name>
        <dbReference type="ChEBI" id="CHEBI:29105"/>
    </cofactor>
    <text evidence="1">Binds 1 zinc ion per subunit.</text>
</comment>
<comment type="activity regulation">
    <text evidence="2">Partially inhibited by MSH when MSmB (a bimane derivative of MSH) is used as substrate.</text>
</comment>
<comment type="biophysicochemical properties">
    <kinetics>
        <KM evidence="2">95 uM for MSmB</KM>
        <text>at 25 mM HEPES, pH 7.5, 30 degrees Celsius.</text>
    </kinetics>
    <phDependence>
        <text evidence="2">Optimum pH is 7-9.</text>
    </phDependence>
</comment>
<comment type="subunit">
    <text evidence="1 2">Monomer.</text>
</comment>
<comment type="disruption phenotype">
    <text evidence="3">Loss of amidase activity on MSmB, no production of the mercapturic acid product AcCys-mB. Limited degradation of MS-RifSV, a rifamycin S MSH conjugate. Increased sensitivity to streptomycin, slight increase in sensitivity to rifamycin but no other antibiotics tested. Increased sensitivity to iodoacetamide, N-ethylmalemide (NEM) and redox cycling (oxidant) agents known to conjugate with MSH such as menadione and plumbagin, but not other oxidants.</text>
</comment>
<comment type="similarity">
    <text evidence="1">Belongs to the MshB deacetylase family. Mca subfamily.</text>
</comment>
<name>MCA_MYCS2</name>
<protein>
    <recommendedName>
        <fullName evidence="1">Mycothiol S-conjugate amidase</fullName>
        <ecNumber evidence="1">3.5.1.115</ecNumber>
    </recommendedName>
</protein>
<sequence>MSELRLMAVHAHPDDESSKGAATTARYAAEGARVMVVTLTGGERGDILNPAMDLPEVHGRIAEVRRDEMAKAAEILGVEHHWLGFVDSGLPEGDPLPPLPDGCFALVPLEEPVKRLVRVIREFRPHVMTTYDENGGYPHPDHIRCHQVSVAAYEAAADHLLYPDAGEPWAVQKLYYNHGFLRQRMQLLQEEFAKNGQEGPFAKWLEHWDPDNDVFANRVTTRVHCAEYFHQRDDALRAHATQIDPKGDFFHAPIEWQQRLWPTEEFELARARVPVTLPEDDLFKGVEP</sequence>
<organism>
    <name type="scientific">Mycolicibacterium smegmatis (strain ATCC 700084 / mc(2)155)</name>
    <name type="common">Mycobacterium smegmatis</name>
    <dbReference type="NCBI Taxonomy" id="246196"/>
    <lineage>
        <taxon>Bacteria</taxon>
        <taxon>Bacillati</taxon>
        <taxon>Actinomycetota</taxon>
        <taxon>Actinomycetes</taxon>
        <taxon>Mycobacteriales</taxon>
        <taxon>Mycobacteriaceae</taxon>
        <taxon>Mycolicibacterium</taxon>
    </lineage>
</organism>
<feature type="chain" id="PRO_0000423186" description="Mycothiol S-conjugate amidase">
    <location>
        <begin position="1"/>
        <end position="288"/>
    </location>
</feature>
<feature type="binding site" evidence="1">
    <location>
        <position position="12"/>
    </location>
    <ligand>
        <name>Zn(2+)</name>
        <dbReference type="ChEBI" id="CHEBI:29105"/>
    </ligand>
</feature>
<feature type="binding site" evidence="1">
    <location>
        <position position="15"/>
    </location>
    <ligand>
        <name>Zn(2+)</name>
        <dbReference type="ChEBI" id="CHEBI:29105"/>
    </ligand>
</feature>
<feature type="binding site" evidence="1">
    <location>
        <position position="142"/>
    </location>
    <ligand>
        <name>Zn(2+)</name>
        <dbReference type="ChEBI" id="CHEBI:29105"/>
    </ligand>
</feature>
<dbReference type="EC" id="3.5.1.115" evidence="1"/>
<dbReference type="EMBL" id="CP000480">
    <property type="protein sequence ID" value="ABK75043.1"/>
    <property type="molecule type" value="Genomic_DNA"/>
</dbReference>
<dbReference type="EMBL" id="CP001663">
    <property type="protein sequence ID" value="AFP41567.1"/>
    <property type="molecule type" value="Genomic_DNA"/>
</dbReference>
<dbReference type="RefSeq" id="WP_003896662.1">
    <property type="nucleotide sequence ID" value="NZ_SIJM01000014.1"/>
</dbReference>
<dbReference type="RefSeq" id="YP_889507.1">
    <property type="nucleotide sequence ID" value="NC_008596.1"/>
</dbReference>
<dbReference type="SMR" id="A0R2W9"/>
<dbReference type="STRING" id="246196.MSMEG_5261"/>
<dbReference type="PaxDb" id="246196-MSMEI_5123"/>
<dbReference type="GeneID" id="93459920"/>
<dbReference type="KEGG" id="msb:LJ00_26020"/>
<dbReference type="KEGG" id="msg:MSMEI_5123"/>
<dbReference type="KEGG" id="msm:MSMEG_5261"/>
<dbReference type="PATRIC" id="fig|246196.19.peg.5132"/>
<dbReference type="eggNOG" id="COG2120">
    <property type="taxonomic scope" value="Bacteria"/>
</dbReference>
<dbReference type="OrthoDB" id="158614at2"/>
<dbReference type="SABIO-RK" id="A0R2W9"/>
<dbReference type="Proteomes" id="UP000000757">
    <property type="component" value="Chromosome"/>
</dbReference>
<dbReference type="Proteomes" id="UP000006158">
    <property type="component" value="Chromosome"/>
</dbReference>
<dbReference type="GO" id="GO:0016811">
    <property type="term" value="F:hydrolase activity, acting on carbon-nitrogen (but not peptide) bonds, in linear amides"/>
    <property type="evidence" value="ECO:0007669"/>
    <property type="project" value="TreeGrafter"/>
</dbReference>
<dbReference type="GO" id="GO:0008270">
    <property type="term" value="F:zinc ion binding"/>
    <property type="evidence" value="ECO:0007669"/>
    <property type="project" value="UniProtKB-UniRule"/>
</dbReference>
<dbReference type="GO" id="GO:0010126">
    <property type="term" value="P:mycothiol metabolic process"/>
    <property type="evidence" value="ECO:0000314"/>
    <property type="project" value="UniProtKB"/>
</dbReference>
<dbReference type="GO" id="GO:0010127">
    <property type="term" value="P:mycothiol-dependent detoxification"/>
    <property type="evidence" value="ECO:0000314"/>
    <property type="project" value="UniProtKB"/>
</dbReference>
<dbReference type="FunFam" id="3.40.50.10320:FF:000001">
    <property type="entry name" value="Mycothiol S-conjugate amidase"/>
    <property type="match status" value="1"/>
</dbReference>
<dbReference type="Gene3D" id="3.40.50.10320">
    <property type="entry name" value="LmbE-like"/>
    <property type="match status" value="1"/>
</dbReference>
<dbReference type="HAMAP" id="MF_01482">
    <property type="entry name" value="Mca"/>
    <property type="match status" value="1"/>
</dbReference>
<dbReference type="InterPro" id="IPR003737">
    <property type="entry name" value="GlcNAc_PI_deacetylase-related"/>
</dbReference>
<dbReference type="InterPro" id="IPR024078">
    <property type="entry name" value="LmbE-like_dom_sf"/>
</dbReference>
<dbReference type="InterPro" id="IPR017811">
    <property type="entry name" value="Mca"/>
</dbReference>
<dbReference type="NCBIfam" id="TIGR03446">
    <property type="entry name" value="mycothiol_Mca"/>
    <property type="match status" value="1"/>
</dbReference>
<dbReference type="PANTHER" id="PTHR12993:SF11">
    <property type="entry name" value="N-ACETYLGLUCOSAMINYL-PHOSPHATIDYLINOSITOL DE-N-ACETYLASE"/>
    <property type="match status" value="1"/>
</dbReference>
<dbReference type="PANTHER" id="PTHR12993">
    <property type="entry name" value="N-ACETYLGLUCOSAMINYL-PHOSPHATIDYLINOSITOL DE-N-ACETYLASE-RELATED"/>
    <property type="match status" value="1"/>
</dbReference>
<dbReference type="Pfam" id="PF02585">
    <property type="entry name" value="PIG-L"/>
    <property type="match status" value="1"/>
</dbReference>
<dbReference type="SUPFAM" id="SSF102588">
    <property type="entry name" value="LmbE-like"/>
    <property type="match status" value="1"/>
</dbReference>
<gene>
    <name evidence="1" type="primary">mca</name>
    <name type="ordered locus">MSMEG_5261</name>
    <name type="ordered locus">MSMEI_5123</name>
</gene>
<evidence type="ECO:0000255" key="1">
    <source>
        <dbReference type="HAMAP-Rule" id="MF_01482"/>
    </source>
</evidence>
<evidence type="ECO:0000269" key="2">
    <source>
    </source>
</evidence>
<evidence type="ECO:0000269" key="3">
    <source>
    </source>
</evidence>
<proteinExistence type="evidence at protein level"/>